<feature type="chain" id="PRO_1000018415" description="Tryptophan synthase beta chain">
    <location>
        <begin position="1"/>
        <end position="418"/>
    </location>
</feature>
<feature type="region of interest" description="Disordered" evidence="2">
    <location>
        <begin position="1"/>
        <end position="28"/>
    </location>
</feature>
<feature type="compositionally biased region" description="Polar residues" evidence="2">
    <location>
        <begin position="1"/>
        <end position="18"/>
    </location>
</feature>
<feature type="modified residue" description="N6-(pyridoxal phosphate)lysine" evidence="1">
    <location>
        <position position="111"/>
    </location>
</feature>
<proteinExistence type="inferred from homology"/>
<keyword id="KW-0028">Amino-acid biosynthesis</keyword>
<keyword id="KW-0057">Aromatic amino acid biosynthesis</keyword>
<keyword id="KW-0456">Lyase</keyword>
<keyword id="KW-0663">Pyridoxal phosphate</keyword>
<keyword id="KW-1185">Reference proteome</keyword>
<keyword id="KW-0822">Tryptophan biosynthesis</keyword>
<reference key="1">
    <citation type="submission" date="2005-08" db="EMBL/GenBank/DDBJ databases">
        <title>Complete sequence of Synechococcus sp. CC9902.</title>
        <authorList>
            <person name="Copeland A."/>
            <person name="Lucas S."/>
            <person name="Lapidus A."/>
            <person name="Barry K."/>
            <person name="Detter J.C."/>
            <person name="Glavina T."/>
            <person name="Hammon N."/>
            <person name="Israni S."/>
            <person name="Pitluck S."/>
            <person name="Martinez M."/>
            <person name="Schmutz J."/>
            <person name="Larimer F."/>
            <person name="Land M."/>
            <person name="Kyrpides N."/>
            <person name="Ivanova N."/>
            <person name="Richardson P."/>
        </authorList>
    </citation>
    <scope>NUCLEOTIDE SEQUENCE [LARGE SCALE GENOMIC DNA]</scope>
    <source>
        <strain>CC9902</strain>
    </source>
</reference>
<comment type="function">
    <text evidence="1">The beta subunit is responsible for the synthesis of L-tryptophan from indole and L-serine.</text>
</comment>
<comment type="catalytic activity">
    <reaction evidence="1">
        <text>(1S,2R)-1-C-(indol-3-yl)glycerol 3-phosphate + L-serine = D-glyceraldehyde 3-phosphate + L-tryptophan + H2O</text>
        <dbReference type="Rhea" id="RHEA:10532"/>
        <dbReference type="ChEBI" id="CHEBI:15377"/>
        <dbReference type="ChEBI" id="CHEBI:33384"/>
        <dbReference type="ChEBI" id="CHEBI:57912"/>
        <dbReference type="ChEBI" id="CHEBI:58866"/>
        <dbReference type="ChEBI" id="CHEBI:59776"/>
        <dbReference type="EC" id="4.2.1.20"/>
    </reaction>
</comment>
<comment type="cofactor">
    <cofactor evidence="1">
        <name>pyridoxal 5'-phosphate</name>
        <dbReference type="ChEBI" id="CHEBI:597326"/>
    </cofactor>
</comment>
<comment type="pathway">
    <text evidence="1">Amino-acid biosynthesis; L-tryptophan biosynthesis; L-tryptophan from chorismate: step 5/5.</text>
</comment>
<comment type="subunit">
    <text evidence="1">Tetramer of two alpha and two beta chains.</text>
</comment>
<comment type="similarity">
    <text evidence="1">Belongs to the TrpB family.</text>
</comment>
<gene>
    <name evidence="1" type="primary">trpB</name>
    <name type="ordered locus">Syncc9902_2098</name>
</gene>
<evidence type="ECO:0000255" key="1">
    <source>
        <dbReference type="HAMAP-Rule" id="MF_00133"/>
    </source>
</evidence>
<evidence type="ECO:0000256" key="2">
    <source>
        <dbReference type="SAM" id="MobiDB-lite"/>
    </source>
</evidence>
<protein>
    <recommendedName>
        <fullName evidence="1">Tryptophan synthase beta chain</fullName>
        <ecNumber evidence="1">4.2.1.20</ecNumber>
    </recommendedName>
</protein>
<organism>
    <name type="scientific">Synechococcus sp. (strain CC9902)</name>
    <dbReference type="NCBI Taxonomy" id="316279"/>
    <lineage>
        <taxon>Bacteria</taxon>
        <taxon>Bacillati</taxon>
        <taxon>Cyanobacteriota</taxon>
        <taxon>Cyanophyceae</taxon>
        <taxon>Synechococcales</taxon>
        <taxon>Synechococcaceae</taxon>
        <taxon>Synechococcus</taxon>
    </lineage>
</organism>
<dbReference type="EC" id="4.2.1.20" evidence="1"/>
<dbReference type="EMBL" id="CP000097">
    <property type="protein sequence ID" value="ABB27056.1"/>
    <property type="molecule type" value="Genomic_DNA"/>
</dbReference>
<dbReference type="RefSeq" id="WP_011360840.1">
    <property type="nucleotide sequence ID" value="NC_007513.1"/>
</dbReference>
<dbReference type="SMR" id="Q3AW11"/>
<dbReference type="STRING" id="316279.Syncc9902_2098"/>
<dbReference type="KEGG" id="sye:Syncc9902_2098"/>
<dbReference type="eggNOG" id="COG0133">
    <property type="taxonomic scope" value="Bacteria"/>
</dbReference>
<dbReference type="HOGENOM" id="CLU_016734_3_1_3"/>
<dbReference type="OrthoDB" id="9766131at2"/>
<dbReference type="UniPathway" id="UPA00035">
    <property type="reaction ID" value="UER00044"/>
</dbReference>
<dbReference type="Proteomes" id="UP000002712">
    <property type="component" value="Chromosome"/>
</dbReference>
<dbReference type="GO" id="GO:0005737">
    <property type="term" value="C:cytoplasm"/>
    <property type="evidence" value="ECO:0007669"/>
    <property type="project" value="TreeGrafter"/>
</dbReference>
<dbReference type="GO" id="GO:0004834">
    <property type="term" value="F:tryptophan synthase activity"/>
    <property type="evidence" value="ECO:0007669"/>
    <property type="project" value="UniProtKB-UniRule"/>
</dbReference>
<dbReference type="CDD" id="cd06446">
    <property type="entry name" value="Trp-synth_B"/>
    <property type="match status" value="1"/>
</dbReference>
<dbReference type="FunFam" id="3.40.50.1100:FF:000001">
    <property type="entry name" value="Tryptophan synthase beta chain"/>
    <property type="match status" value="1"/>
</dbReference>
<dbReference type="FunFam" id="3.40.50.1100:FF:000004">
    <property type="entry name" value="Tryptophan synthase beta chain"/>
    <property type="match status" value="1"/>
</dbReference>
<dbReference type="Gene3D" id="3.40.50.1100">
    <property type="match status" value="2"/>
</dbReference>
<dbReference type="HAMAP" id="MF_00133">
    <property type="entry name" value="Trp_synth_beta"/>
    <property type="match status" value="1"/>
</dbReference>
<dbReference type="InterPro" id="IPR006653">
    <property type="entry name" value="Trp_synth_b_CS"/>
</dbReference>
<dbReference type="InterPro" id="IPR006654">
    <property type="entry name" value="Trp_synth_beta"/>
</dbReference>
<dbReference type="InterPro" id="IPR023026">
    <property type="entry name" value="Trp_synth_beta/beta-like"/>
</dbReference>
<dbReference type="InterPro" id="IPR001926">
    <property type="entry name" value="TrpB-like_PALP"/>
</dbReference>
<dbReference type="InterPro" id="IPR036052">
    <property type="entry name" value="TrpB-like_PALP_sf"/>
</dbReference>
<dbReference type="NCBIfam" id="TIGR00263">
    <property type="entry name" value="trpB"/>
    <property type="match status" value="1"/>
</dbReference>
<dbReference type="PANTHER" id="PTHR48077:SF3">
    <property type="entry name" value="TRYPTOPHAN SYNTHASE"/>
    <property type="match status" value="1"/>
</dbReference>
<dbReference type="PANTHER" id="PTHR48077">
    <property type="entry name" value="TRYPTOPHAN SYNTHASE-RELATED"/>
    <property type="match status" value="1"/>
</dbReference>
<dbReference type="Pfam" id="PF00291">
    <property type="entry name" value="PALP"/>
    <property type="match status" value="1"/>
</dbReference>
<dbReference type="PIRSF" id="PIRSF001413">
    <property type="entry name" value="Trp_syn_beta"/>
    <property type="match status" value="1"/>
</dbReference>
<dbReference type="SUPFAM" id="SSF53686">
    <property type="entry name" value="Tryptophan synthase beta subunit-like PLP-dependent enzymes"/>
    <property type="match status" value="1"/>
</dbReference>
<dbReference type="PROSITE" id="PS00168">
    <property type="entry name" value="TRP_SYNTHASE_BETA"/>
    <property type="match status" value="1"/>
</dbReference>
<sequence length="418" mass="44727">MTSTLPKASQPDPSSLQPSARPGAHGRFGRFGGQYVPETLMPALAELEQSAAQAWADPAFTGRLNHLLKTYVGRATPLYEAERLTAHYRRDDGGPRIWLKREDLNHTGAHKINNALGQALLALRMGKKRIIAETGAGQHGVATATVCARFGLDCVIYMGAEDMRRQALNVFRMRLLGATVAPVTAGSATLKDATSEAIRDWVTNVETTHYILGSVAGPHPYPMLVRDFHAVIGQEAKQQCEEAFGRLPDVLMACVGGGSNAMGLFHPFVQDTSVRLIGVEAAGDGVNTPRHAATITEGRAGVLHGAMSLLLQDSDGQVQEAHSISAGLDYPGVGPEHSYLKEIGRAEYAAVTDEQALDGLRLVSELEGIIPALETAHAFAWLEQLCPTLPQGCEVVINCSGRGDKDVNTVAEKLGDKL</sequence>
<name>TRPB_SYNS9</name>
<accession>Q3AW11</accession>